<feature type="chain" id="PRO_0000263548" description="Small ribosomal subunit protein uS12">
    <location>
        <begin position="1"/>
        <end position="124"/>
    </location>
</feature>
<feature type="region of interest" description="Disordered" evidence="3">
    <location>
        <begin position="1"/>
        <end position="23"/>
    </location>
</feature>
<feature type="region of interest" description="Disordered" evidence="3">
    <location>
        <begin position="101"/>
        <end position="124"/>
    </location>
</feature>
<feature type="compositionally biased region" description="Basic residues" evidence="3">
    <location>
        <begin position="111"/>
        <end position="124"/>
    </location>
</feature>
<feature type="modified residue" description="3-methylthioaspartic acid" evidence="1">
    <location>
        <position position="89"/>
    </location>
</feature>
<organism>
    <name type="scientific">Chromohalobacter salexigens (strain ATCC BAA-138 / DSM 3043 / CIP 106854 / NCIMB 13768 / 1H11)</name>
    <dbReference type="NCBI Taxonomy" id="290398"/>
    <lineage>
        <taxon>Bacteria</taxon>
        <taxon>Pseudomonadati</taxon>
        <taxon>Pseudomonadota</taxon>
        <taxon>Gammaproteobacteria</taxon>
        <taxon>Oceanospirillales</taxon>
        <taxon>Halomonadaceae</taxon>
        <taxon>Chromohalobacter</taxon>
    </lineage>
</organism>
<gene>
    <name evidence="2" type="primary">rpsL</name>
    <name type="ordered locus">Csal_0416</name>
</gene>
<comment type="function">
    <text evidence="2">With S4 and S5 plays an important role in translational accuracy.</text>
</comment>
<comment type="function">
    <text evidence="2">Interacts with and stabilizes bases of the 16S rRNA that are involved in tRNA selection in the A site and with the mRNA backbone. Located at the interface of the 30S and 50S subunits, it traverses the body of the 30S subunit contacting proteins on the other side and probably holding the rRNA structure together. The combined cluster of proteins S8, S12 and S17 appears to hold together the shoulder and platform of the 30S subunit.</text>
</comment>
<comment type="subunit">
    <text evidence="2">Part of the 30S ribosomal subunit. Contacts proteins S8 and S17. May interact with IF1 in the 30S initiation complex.</text>
</comment>
<comment type="similarity">
    <text evidence="2">Belongs to the universal ribosomal protein uS12 family.</text>
</comment>
<keyword id="KW-0488">Methylation</keyword>
<keyword id="KW-1185">Reference proteome</keyword>
<keyword id="KW-0687">Ribonucleoprotein</keyword>
<keyword id="KW-0689">Ribosomal protein</keyword>
<keyword id="KW-0694">RNA-binding</keyword>
<keyword id="KW-0699">rRNA-binding</keyword>
<keyword id="KW-0820">tRNA-binding</keyword>
<proteinExistence type="inferred from homology"/>
<dbReference type="EMBL" id="CP000285">
    <property type="protein sequence ID" value="ABE57778.1"/>
    <property type="molecule type" value="Genomic_DNA"/>
</dbReference>
<dbReference type="RefSeq" id="WP_011505724.1">
    <property type="nucleotide sequence ID" value="NC_007963.1"/>
</dbReference>
<dbReference type="SMR" id="Q1R0I0"/>
<dbReference type="STRING" id="290398.Csal_0416"/>
<dbReference type="GeneID" id="95333169"/>
<dbReference type="KEGG" id="csa:Csal_0416"/>
<dbReference type="eggNOG" id="COG0048">
    <property type="taxonomic scope" value="Bacteria"/>
</dbReference>
<dbReference type="HOGENOM" id="CLU_104295_1_2_6"/>
<dbReference type="OrthoDB" id="9802366at2"/>
<dbReference type="Proteomes" id="UP000000239">
    <property type="component" value="Chromosome"/>
</dbReference>
<dbReference type="GO" id="GO:0015935">
    <property type="term" value="C:small ribosomal subunit"/>
    <property type="evidence" value="ECO:0007669"/>
    <property type="project" value="InterPro"/>
</dbReference>
<dbReference type="GO" id="GO:0019843">
    <property type="term" value="F:rRNA binding"/>
    <property type="evidence" value="ECO:0007669"/>
    <property type="project" value="UniProtKB-UniRule"/>
</dbReference>
<dbReference type="GO" id="GO:0003735">
    <property type="term" value="F:structural constituent of ribosome"/>
    <property type="evidence" value="ECO:0007669"/>
    <property type="project" value="InterPro"/>
</dbReference>
<dbReference type="GO" id="GO:0000049">
    <property type="term" value="F:tRNA binding"/>
    <property type="evidence" value="ECO:0007669"/>
    <property type="project" value="UniProtKB-UniRule"/>
</dbReference>
<dbReference type="GO" id="GO:0006412">
    <property type="term" value="P:translation"/>
    <property type="evidence" value="ECO:0007669"/>
    <property type="project" value="UniProtKB-UniRule"/>
</dbReference>
<dbReference type="CDD" id="cd03368">
    <property type="entry name" value="Ribosomal_S12"/>
    <property type="match status" value="1"/>
</dbReference>
<dbReference type="FunFam" id="2.40.50.140:FF:000001">
    <property type="entry name" value="30S ribosomal protein S12"/>
    <property type="match status" value="1"/>
</dbReference>
<dbReference type="Gene3D" id="2.40.50.140">
    <property type="entry name" value="Nucleic acid-binding proteins"/>
    <property type="match status" value="1"/>
</dbReference>
<dbReference type="HAMAP" id="MF_00403_B">
    <property type="entry name" value="Ribosomal_uS12_B"/>
    <property type="match status" value="1"/>
</dbReference>
<dbReference type="InterPro" id="IPR012340">
    <property type="entry name" value="NA-bd_OB-fold"/>
</dbReference>
<dbReference type="InterPro" id="IPR006032">
    <property type="entry name" value="Ribosomal_uS12"/>
</dbReference>
<dbReference type="InterPro" id="IPR005679">
    <property type="entry name" value="Ribosomal_uS12_bac"/>
</dbReference>
<dbReference type="NCBIfam" id="TIGR00981">
    <property type="entry name" value="rpsL_bact"/>
    <property type="match status" value="1"/>
</dbReference>
<dbReference type="PANTHER" id="PTHR11652">
    <property type="entry name" value="30S RIBOSOMAL PROTEIN S12 FAMILY MEMBER"/>
    <property type="match status" value="1"/>
</dbReference>
<dbReference type="Pfam" id="PF00164">
    <property type="entry name" value="Ribosom_S12_S23"/>
    <property type="match status" value="1"/>
</dbReference>
<dbReference type="PIRSF" id="PIRSF002133">
    <property type="entry name" value="Ribosomal_S12/S23"/>
    <property type="match status" value="1"/>
</dbReference>
<dbReference type="PRINTS" id="PR01034">
    <property type="entry name" value="RIBOSOMALS12"/>
</dbReference>
<dbReference type="SUPFAM" id="SSF50249">
    <property type="entry name" value="Nucleic acid-binding proteins"/>
    <property type="match status" value="1"/>
</dbReference>
<dbReference type="PROSITE" id="PS00055">
    <property type="entry name" value="RIBOSOMAL_S12"/>
    <property type="match status" value="1"/>
</dbReference>
<name>RS12_CHRSD</name>
<accession>Q1R0I0</accession>
<evidence type="ECO:0000250" key="1"/>
<evidence type="ECO:0000255" key="2">
    <source>
        <dbReference type="HAMAP-Rule" id="MF_00403"/>
    </source>
</evidence>
<evidence type="ECO:0000256" key="3">
    <source>
        <dbReference type="SAM" id="MobiDB-lite"/>
    </source>
</evidence>
<evidence type="ECO:0000305" key="4"/>
<sequence>MATINQLVRKPRKRPVAKSDVPALQSCPQKRGVCTRVYTTTPKKPNSALRKVCRVRLTNGYEVASYIGGEGHNLQEHSVVLIRGGRVKDLPGVRYHTVRGALDTSGVQNRRQGRSKYGTKRPKS</sequence>
<reference key="1">
    <citation type="journal article" date="2011" name="Stand. Genomic Sci.">
        <title>Complete genome sequence of the halophilic and highly halotolerant Chromohalobacter salexigens type strain (1H11(T)).</title>
        <authorList>
            <person name="Copeland A."/>
            <person name="O'Connor K."/>
            <person name="Lucas S."/>
            <person name="Lapidus A."/>
            <person name="Berry K.W."/>
            <person name="Detter J.C."/>
            <person name="Del Rio T.G."/>
            <person name="Hammon N."/>
            <person name="Dalin E."/>
            <person name="Tice H."/>
            <person name="Pitluck S."/>
            <person name="Bruce D."/>
            <person name="Goodwin L."/>
            <person name="Han C."/>
            <person name="Tapia R."/>
            <person name="Saunders E."/>
            <person name="Schmutz J."/>
            <person name="Brettin T."/>
            <person name="Larimer F."/>
            <person name="Land M."/>
            <person name="Hauser L."/>
            <person name="Vargas C."/>
            <person name="Nieto J.J."/>
            <person name="Kyrpides N.C."/>
            <person name="Ivanova N."/>
            <person name="Goker M."/>
            <person name="Klenk H.P."/>
            <person name="Csonka L.N."/>
            <person name="Woyke T."/>
        </authorList>
    </citation>
    <scope>NUCLEOTIDE SEQUENCE [LARGE SCALE GENOMIC DNA]</scope>
    <source>
        <strain>ATCC BAA-138 / DSM 3043 / CIP 106854 / NCIMB 13768 / 1H11</strain>
    </source>
</reference>
<protein>
    <recommendedName>
        <fullName evidence="2">Small ribosomal subunit protein uS12</fullName>
    </recommendedName>
    <alternativeName>
        <fullName evidence="4">30S ribosomal protein S12</fullName>
    </alternativeName>
</protein>